<evidence type="ECO:0000255" key="1">
    <source>
        <dbReference type="HAMAP-Rule" id="MF_01329"/>
    </source>
</evidence>
<organism>
    <name type="scientific">Mesostigma viride</name>
    <name type="common">Green alga</name>
    <dbReference type="NCBI Taxonomy" id="41882"/>
    <lineage>
        <taxon>Eukaryota</taxon>
        <taxon>Viridiplantae</taxon>
        <taxon>Streptophyta</taxon>
        <taxon>Mesostigmatophyceae</taxon>
        <taxon>Mesostigmatales</taxon>
        <taxon>Mesostigmataceae</taxon>
        <taxon>Mesostigma</taxon>
    </lineage>
</organism>
<proteinExistence type="inferred from homology"/>
<reference key="1">
    <citation type="journal article" date="2000" name="Nature">
        <title>Ancestral chloroplast genome in Mesostigma viride reveals an early branch of green plant evolution.</title>
        <authorList>
            <person name="Lemieux C."/>
            <person name="Otis C."/>
            <person name="Turmel M."/>
        </authorList>
    </citation>
    <scope>NUCLEOTIDE SEQUENCE [LARGE SCALE GENOMIC DNA]</scope>
    <source>
        <strain>NIES-296 / KY-14 / CCMP 2046</strain>
    </source>
</reference>
<keyword id="KW-0150">Chloroplast</keyword>
<keyword id="KW-0472">Membrane</keyword>
<keyword id="KW-0602">Photosynthesis</keyword>
<keyword id="KW-0604">Photosystem II</keyword>
<keyword id="KW-0934">Plastid</keyword>
<keyword id="KW-0793">Thylakoid</keyword>
<keyword id="KW-0812">Transmembrane</keyword>
<keyword id="KW-1133">Transmembrane helix</keyword>
<feature type="chain" id="PRO_0000059032" description="Photosystem II reaction center protein Psb30">
    <location>
        <begin position="1"/>
        <end position="33"/>
    </location>
</feature>
<feature type="transmembrane region" description="Helical" evidence="1">
    <location>
        <begin position="5"/>
        <end position="25"/>
    </location>
</feature>
<name>PSB30_MESVI</name>
<gene>
    <name evidence="1" type="primary">psb30</name>
    <name evidence="1" type="synonym">ycf12</name>
</gene>
<comment type="function">
    <text evidence="1">A core subunit of photosystem II (PSII), probably helps stabilize the reaction center.</text>
</comment>
<comment type="subunit">
    <text evidence="1">PSII is composed of 1 copy each of membrane proteins PsbA, PsbB, PsbC, PsbD, PsbE, PsbF, PsbH, PsbI, PsbJ, PsbK, PsbL, PsbM, PsbT, PsbX, PsbY, PsbZ, Psb30/Ycf12, peripheral proteins of the oxygen-evolving complex and a large number of cofactors. It forms dimeric complexes.</text>
</comment>
<comment type="subcellular location">
    <subcellularLocation>
        <location evidence="1">Plastid</location>
        <location evidence="1">Chloroplast thylakoid membrane</location>
        <topology evidence="1">Single-pass membrane protein</topology>
    </subcellularLocation>
</comment>
<comment type="similarity">
    <text evidence="1">Belongs to the Psb30/Ycf12 family.</text>
</comment>
<dbReference type="EMBL" id="AF166114">
    <property type="protein sequence ID" value="AAF43828.1"/>
    <property type="molecule type" value="Genomic_DNA"/>
</dbReference>
<dbReference type="RefSeq" id="NP_038387.1">
    <property type="nucleotide sequence ID" value="NC_002186.1"/>
</dbReference>
<dbReference type="SMR" id="Q9MUS3"/>
<dbReference type="GeneID" id="800864"/>
<dbReference type="GO" id="GO:0009535">
    <property type="term" value="C:chloroplast thylakoid membrane"/>
    <property type="evidence" value="ECO:0007669"/>
    <property type="project" value="UniProtKB-SubCell"/>
</dbReference>
<dbReference type="GO" id="GO:0009523">
    <property type="term" value="C:photosystem II"/>
    <property type="evidence" value="ECO:0007669"/>
    <property type="project" value="UniProtKB-KW"/>
</dbReference>
<dbReference type="GO" id="GO:0015979">
    <property type="term" value="P:photosynthesis"/>
    <property type="evidence" value="ECO:0007669"/>
    <property type="project" value="UniProtKB-KW"/>
</dbReference>
<dbReference type="HAMAP" id="MF_01329">
    <property type="entry name" value="PSII_Psb30_Ycf12"/>
    <property type="match status" value="1"/>
</dbReference>
<dbReference type="InterPro" id="IPR010284">
    <property type="entry name" value="PSII_Ycf12_core-subunit"/>
</dbReference>
<dbReference type="NCBIfam" id="NF010239">
    <property type="entry name" value="PRK13686.1"/>
    <property type="match status" value="1"/>
</dbReference>
<dbReference type="Pfam" id="PF05969">
    <property type="entry name" value="PSII_Ycf12"/>
    <property type="match status" value="1"/>
</dbReference>
<sequence>MNLEVVVQLGSLSLIVLAGPIIVLLLASQKGNL</sequence>
<geneLocation type="chloroplast"/>
<accession>Q9MUS3</accession>
<protein>
    <recommendedName>
        <fullName evidence="1">Photosystem II reaction center protein Psb30</fullName>
    </recommendedName>
    <alternativeName>
        <fullName evidence="1">Photosystem II reaction center protein Ycf12</fullName>
    </alternativeName>
</protein>